<feature type="transit peptide" description="Mitochondrion" evidence="5">
    <location>
        <begin position="1"/>
        <end position="19"/>
    </location>
</feature>
<feature type="chain" id="PRO_0000452974" description="Iron-sulfur clusters transporter ABCB7, mitochondrial" evidence="5">
    <location>
        <begin position="20"/>
        <end position="743"/>
    </location>
</feature>
<feature type="topological domain" description="Mitochondrial matrix" evidence="2">
    <location>
        <begin position="20"/>
        <end position="131"/>
    </location>
</feature>
<feature type="transmembrane region" description="Helical" evidence="5 7">
    <location>
        <begin position="132"/>
        <end position="152"/>
    </location>
</feature>
<feature type="topological domain" description="Mitochondrial intermembrane" evidence="2">
    <location>
        <begin position="153"/>
        <end position="168"/>
    </location>
</feature>
<feature type="transmembrane region" description="Helical" evidence="5 7">
    <location>
        <begin position="169"/>
        <end position="189"/>
    </location>
</feature>
<feature type="topological domain" description="Mitochondrial matrix" evidence="2">
    <location>
        <begin position="190"/>
        <end position="250"/>
    </location>
</feature>
<feature type="transmembrane region" description="Helical" evidence="5 7">
    <location>
        <begin position="251"/>
        <end position="271"/>
    </location>
</feature>
<feature type="topological domain" description="Mitochondrial intermembrane" evidence="2">
    <location>
        <begin position="272"/>
        <end position="281"/>
    </location>
</feature>
<feature type="transmembrane region" description="Helical" evidence="5 7">
    <location>
        <begin position="282"/>
        <end position="302"/>
    </location>
</feature>
<feature type="topological domain" description="Mitochondrial matrix" evidence="2">
    <location>
        <begin position="303"/>
        <end position="364"/>
    </location>
</feature>
<feature type="transmembrane region" description="Helical" evidence="5 7">
    <location>
        <begin position="365"/>
        <end position="385"/>
    </location>
</feature>
<feature type="topological domain" description="Mitochondrial intermembrane" evidence="2">
    <location>
        <begin position="386"/>
        <end position="400"/>
    </location>
</feature>
<feature type="transmembrane region" description="Helical" evidence="5 7">
    <location>
        <begin position="401"/>
        <end position="421"/>
    </location>
</feature>
<feature type="topological domain" description="Mitochondrial matrix" evidence="2">
    <location>
        <begin position="422"/>
        <end position="743"/>
    </location>
</feature>
<feature type="domain" description="ABC transmembrane type-1" evidence="7">
    <location>
        <begin position="131"/>
        <end position="427"/>
    </location>
</feature>
<feature type="domain" description="ABC transporter" evidence="6">
    <location>
        <begin position="463"/>
        <end position="697"/>
    </location>
</feature>
<feature type="region of interest" description="Disordered" evidence="8">
    <location>
        <begin position="45"/>
        <end position="64"/>
    </location>
</feature>
<feature type="region of interest" description="Disordered" evidence="8">
    <location>
        <begin position="703"/>
        <end position="724"/>
    </location>
</feature>
<feature type="compositionally biased region" description="Basic and acidic residues" evidence="8">
    <location>
        <begin position="712"/>
        <end position="724"/>
    </location>
</feature>
<feature type="binding site" evidence="2">
    <location>
        <begin position="306"/>
        <end position="310"/>
    </location>
    <ligand>
        <name>glutathione</name>
        <dbReference type="ChEBI" id="CHEBI:57925"/>
    </ligand>
</feature>
<feature type="binding site" evidence="2">
    <location>
        <begin position="369"/>
        <end position="372"/>
    </location>
    <ligand>
        <name>glutathione</name>
        <dbReference type="ChEBI" id="CHEBI:57925"/>
    </ligand>
</feature>
<feature type="binding site" evidence="3">
    <location>
        <position position="419"/>
    </location>
    <ligand>
        <name>glutathione</name>
        <dbReference type="ChEBI" id="CHEBI:57925"/>
    </ligand>
</feature>
<feature type="binding site" evidence="4">
    <location>
        <position position="472"/>
    </location>
    <ligand>
        <name>ATP</name>
        <dbReference type="ChEBI" id="CHEBI:30616"/>
    </ligand>
</feature>
<feature type="binding site" evidence="6">
    <location>
        <begin position="496"/>
        <end position="503"/>
    </location>
    <ligand>
        <name>ATP</name>
        <dbReference type="ChEBI" id="CHEBI:30616"/>
    </ligand>
</feature>
<proteinExistence type="inferred from homology"/>
<name>ABCB7_DANRE</name>
<accession>E7F6F7</accession>
<evidence type="ECO:0000250" key="1">
    <source>
        <dbReference type="UniProtKB" id="O75027"/>
    </source>
</evidence>
<evidence type="ECO:0000250" key="2">
    <source>
        <dbReference type="UniProtKB" id="P40416"/>
    </source>
</evidence>
<evidence type="ECO:0000250" key="3">
    <source>
        <dbReference type="UniProtKB" id="Q2G506"/>
    </source>
</evidence>
<evidence type="ECO:0000250" key="4">
    <source>
        <dbReference type="UniProtKB" id="Q9NP58"/>
    </source>
</evidence>
<evidence type="ECO:0000255" key="5"/>
<evidence type="ECO:0000255" key="6">
    <source>
        <dbReference type="PROSITE-ProRule" id="PRU00434"/>
    </source>
</evidence>
<evidence type="ECO:0000255" key="7">
    <source>
        <dbReference type="PROSITE-ProRule" id="PRU00441"/>
    </source>
</evidence>
<evidence type="ECO:0000256" key="8">
    <source>
        <dbReference type="SAM" id="MobiDB-lite"/>
    </source>
</evidence>
<evidence type="ECO:0000269" key="9">
    <source>
    </source>
</evidence>
<evidence type="ECO:0000305" key="10"/>
<protein>
    <recommendedName>
        <fullName evidence="1">Iron-sulfur clusters transporter ABCB7, mitochondrial</fullName>
    </recommendedName>
    <alternativeName>
        <fullName evidence="10">ATP-binding cassette sub-family B member 7, mitochondrial</fullName>
    </alternativeName>
</protein>
<reference key="1">
    <citation type="journal article" date="2013" name="Nature">
        <title>The zebrafish reference genome sequence and its relationship to the human genome.</title>
        <authorList>
            <person name="Howe K."/>
            <person name="Clark M.D."/>
            <person name="Torroja C.F."/>
            <person name="Torrance J."/>
            <person name="Berthelot C."/>
            <person name="Muffato M."/>
            <person name="Collins J.E."/>
            <person name="Humphray S."/>
            <person name="McLaren K."/>
            <person name="Matthews L."/>
            <person name="McLaren S."/>
            <person name="Sealy I."/>
            <person name="Caccamo M."/>
            <person name="Churcher C."/>
            <person name="Scott C."/>
            <person name="Barrett J.C."/>
            <person name="Koch R."/>
            <person name="Rauch G.J."/>
            <person name="White S."/>
            <person name="Chow W."/>
            <person name="Kilian B."/>
            <person name="Quintais L.T."/>
            <person name="Guerra-Assuncao J.A."/>
            <person name="Zhou Y."/>
            <person name="Gu Y."/>
            <person name="Yen J."/>
            <person name="Vogel J.H."/>
            <person name="Eyre T."/>
            <person name="Redmond S."/>
            <person name="Banerjee R."/>
            <person name="Chi J."/>
            <person name="Fu B."/>
            <person name="Langley E."/>
            <person name="Maguire S.F."/>
            <person name="Laird G.K."/>
            <person name="Lloyd D."/>
            <person name="Kenyon E."/>
            <person name="Donaldson S."/>
            <person name="Sehra H."/>
            <person name="Almeida-King J."/>
            <person name="Loveland J."/>
            <person name="Trevanion S."/>
            <person name="Jones M."/>
            <person name="Quail M."/>
            <person name="Willey D."/>
            <person name="Hunt A."/>
            <person name="Burton J."/>
            <person name="Sims S."/>
            <person name="McLay K."/>
            <person name="Plumb B."/>
            <person name="Davis J."/>
            <person name="Clee C."/>
            <person name="Oliver K."/>
            <person name="Clark R."/>
            <person name="Riddle C."/>
            <person name="Elliot D."/>
            <person name="Threadgold G."/>
            <person name="Harden G."/>
            <person name="Ware D."/>
            <person name="Begum S."/>
            <person name="Mortimore B."/>
            <person name="Kerry G."/>
            <person name="Heath P."/>
            <person name="Phillimore B."/>
            <person name="Tracey A."/>
            <person name="Corby N."/>
            <person name="Dunn M."/>
            <person name="Johnson C."/>
            <person name="Wood J."/>
            <person name="Clark S."/>
            <person name="Pelan S."/>
            <person name="Griffiths G."/>
            <person name="Smith M."/>
            <person name="Glithero R."/>
            <person name="Howden P."/>
            <person name="Barker N."/>
            <person name="Lloyd C."/>
            <person name="Stevens C."/>
            <person name="Harley J."/>
            <person name="Holt K."/>
            <person name="Panagiotidis G."/>
            <person name="Lovell J."/>
            <person name="Beasley H."/>
            <person name="Henderson C."/>
            <person name="Gordon D."/>
            <person name="Auger K."/>
            <person name="Wright D."/>
            <person name="Collins J."/>
            <person name="Raisen C."/>
            <person name="Dyer L."/>
            <person name="Leung K."/>
            <person name="Robertson L."/>
            <person name="Ambridge K."/>
            <person name="Leongamornlert D."/>
            <person name="McGuire S."/>
            <person name="Gilderthorp R."/>
            <person name="Griffiths C."/>
            <person name="Manthravadi D."/>
            <person name="Nichol S."/>
            <person name="Barker G."/>
            <person name="Whitehead S."/>
            <person name="Kay M."/>
            <person name="Brown J."/>
            <person name="Murnane C."/>
            <person name="Gray E."/>
            <person name="Humphries M."/>
            <person name="Sycamore N."/>
            <person name="Barker D."/>
            <person name="Saunders D."/>
            <person name="Wallis J."/>
            <person name="Babbage A."/>
            <person name="Hammond S."/>
            <person name="Mashreghi-Mohammadi M."/>
            <person name="Barr L."/>
            <person name="Martin S."/>
            <person name="Wray P."/>
            <person name="Ellington A."/>
            <person name="Matthews N."/>
            <person name="Ellwood M."/>
            <person name="Woodmansey R."/>
            <person name="Clark G."/>
            <person name="Cooper J."/>
            <person name="Tromans A."/>
            <person name="Grafham D."/>
            <person name="Skuce C."/>
            <person name="Pandian R."/>
            <person name="Andrews R."/>
            <person name="Harrison E."/>
            <person name="Kimberley A."/>
            <person name="Garnett J."/>
            <person name="Fosker N."/>
            <person name="Hall R."/>
            <person name="Garner P."/>
            <person name="Kelly D."/>
            <person name="Bird C."/>
            <person name="Palmer S."/>
            <person name="Gehring I."/>
            <person name="Berger A."/>
            <person name="Dooley C.M."/>
            <person name="Ersan-Urun Z."/>
            <person name="Eser C."/>
            <person name="Geiger H."/>
            <person name="Geisler M."/>
            <person name="Karotki L."/>
            <person name="Kirn A."/>
            <person name="Konantz J."/>
            <person name="Konantz M."/>
            <person name="Oberlander M."/>
            <person name="Rudolph-Geiger S."/>
            <person name="Teucke M."/>
            <person name="Lanz C."/>
            <person name="Raddatz G."/>
            <person name="Osoegawa K."/>
            <person name="Zhu B."/>
            <person name="Rapp A."/>
            <person name="Widaa S."/>
            <person name="Langford C."/>
            <person name="Yang F."/>
            <person name="Schuster S.C."/>
            <person name="Carter N.P."/>
            <person name="Harrow J."/>
            <person name="Ning Z."/>
            <person name="Herrero J."/>
            <person name="Searle S.M."/>
            <person name="Enright A."/>
            <person name="Geisler R."/>
            <person name="Plasterk R.H."/>
            <person name="Lee C."/>
            <person name="Westerfield M."/>
            <person name="de Jong P.J."/>
            <person name="Zon L.I."/>
            <person name="Postlethwait J.H."/>
            <person name="Nusslein-Volhard C."/>
            <person name="Hubbard T.J."/>
            <person name="Roest Crollius H."/>
            <person name="Rogers J."/>
            <person name="Stemple D.L."/>
        </authorList>
    </citation>
    <scope>NUCLEOTIDE SEQUENCE [LARGE SCALE GENOMIC DNA]</scope>
    <source>
        <strain>Tuebingen</strain>
    </source>
</reference>
<reference key="2">
    <citation type="journal article" date="2016" name="J. Appl. Toxicol.">
        <title>Danio rerio ABC transporter genes abcb3 and abcb7 play a protecting role against metal contamination.</title>
        <authorList>
            <person name="Lerebours A."/>
            <person name="To V.V."/>
            <person name="Bourdineaud J.P."/>
        </authorList>
    </citation>
    <scope>FUNCTION</scope>
</reference>
<gene>
    <name type="primary">abcb7</name>
</gene>
<comment type="function">
    <text evidence="1 9">Exports glutathione-coordinated iron-sulfur clusters such as [2Fe-2S]-(GS)4 cluster from the mitochondria to the cytosol in an ATP-dependent manner allowing the assembly of the cytosolic iron-sulfur (Fe/S) cluster-containing proteins and participates in iron homeostasis (By similarity). May play a role in cadmium, zinc and mercury detoxification (PubMed:27734548).</text>
</comment>
<comment type="catalytic activity">
    <reaction evidence="1">
        <text>(glutathione)4[2Fe(III)-2S] cluster(in) + ATP + H2O = (glutathione)4[2Fe(III)-2S] cluster(out) + ADP + phosphate + H(+)</text>
        <dbReference type="Rhea" id="RHEA:67028"/>
        <dbReference type="ChEBI" id="CHEBI:15377"/>
        <dbReference type="ChEBI" id="CHEBI:15378"/>
        <dbReference type="ChEBI" id="CHEBI:30616"/>
        <dbReference type="ChEBI" id="CHEBI:43474"/>
        <dbReference type="ChEBI" id="CHEBI:167627"/>
        <dbReference type="ChEBI" id="CHEBI:456216"/>
    </reaction>
    <physiologicalReaction direction="left-to-right" evidence="1">
        <dbReference type="Rhea" id="RHEA:67029"/>
    </physiologicalReaction>
</comment>
<comment type="subunit">
    <text evidence="1">Homodimer.</text>
</comment>
<comment type="subcellular location">
    <subcellularLocation>
        <location evidence="2">Mitochondrion inner membrane</location>
        <topology evidence="2">Multi-pass membrane protein</topology>
    </subcellularLocation>
</comment>
<comment type="similarity">
    <text evidence="10">Belongs to the ABC transporter superfamily. ABCB family. Heavy Metal importer (TC 3.A.1.210) subfamily.</text>
</comment>
<organism>
    <name type="scientific">Danio rerio</name>
    <name type="common">Zebrafish</name>
    <name type="synonym">Brachydanio rerio</name>
    <dbReference type="NCBI Taxonomy" id="7955"/>
    <lineage>
        <taxon>Eukaryota</taxon>
        <taxon>Metazoa</taxon>
        <taxon>Chordata</taxon>
        <taxon>Craniata</taxon>
        <taxon>Vertebrata</taxon>
        <taxon>Euteleostomi</taxon>
        <taxon>Actinopterygii</taxon>
        <taxon>Neopterygii</taxon>
        <taxon>Teleostei</taxon>
        <taxon>Ostariophysi</taxon>
        <taxon>Cypriniformes</taxon>
        <taxon>Danionidae</taxon>
        <taxon>Danioninae</taxon>
        <taxon>Danio</taxon>
    </lineage>
</organism>
<sequence>MAPLLVPLKCGFHMQRRKLSLLLQRSSAVQAWTFHDHRAANKRKERNTYLLSDPSRESSTWANNRGQNSQQILEAVKHLHLQERQCWHGNAGGGLSADPKNVLKEVNSSKILGAMFTYVWPKDRPDLRARVVISLSLLAGAKITNVMVPFMFKYAVDSLNQMSGHMLNLSDAPNTVVTMATAVLIGYGVSRTGSALFNELRNAVFGKVAQSSIRRIAKNVFLHLHNLDLGFHLSRQTGALSKAIDRGTRGISFVLSALVFNLGPTLFEMMLVSGILYYKCGGHFALVTLGTLSAYTAFTVAVTQWRTQFRIEMNKADNEAGNAAIDSLLNYETVKYFNNEKYEAERYDGFLKVYESSSLKTTSTLAMLNFGQSAIFSVGLTAIMVLASKGIMSGTMTVGDLVMVNGLLFQLSLPLNFLGTVYRETRQALIDMNTLFTLLSVDTKIKEKEMAPPLIVTPQEATIRFEDVYFEYLEGQKVLNGVSFEVPAGKKVAIVGGSGSGKSTIVRLLFRFYEPQQGNIYIAGQNIRDVGLESLRKAVGVVPQDAVLFHNTIFYNLMYGNINATAEDVYRVARLAGIHDAILKMPHKYDTQVGERGLKLSGGEKQRVAIARAILKNPPILLYDEATSSLDSVTEENILTSMKEMVKDRTSVFIAHRLSTIVDADEIIVLNQGKVAERGNHQTLLDTPGSLYANLWNTQNSRILSNGSKPEPVPERVSQKEEERKKLQEEIMNSVKGCGNCSC</sequence>
<keyword id="KW-0067">ATP-binding</keyword>
<keyword id="KW-0472">Membrane</keyword>
<keyword id="KW-0496">Mitochondrion</keyword>
<keyword id="KW-0999">Mitochondrion inner membrane</keyword>
<keyword id="KW-0547">Nucleotide-binding</keyword>
<keyword id="KW-1185">Reference proteome</keyword>
<keyword id="KW-0809">Transit peptide</keyword>
<keyword id="KW-0812">Transmembrane</keyword>
<keyword id="KW-1133">Transmembrane helix</keyword>
<keyword id="KW-0813">Transport</keyword>
<dbReference type="EMBL" id="AL954179">
    <property type="status" value="NOT_ANNOTATED_CDS"/>
    <property type="molecule type" value="Genomic_DNA"/>
</dbReference>
<dbReference type="EMBL" id="CR812849">
    <property type="status" value="NOT_ANNOTATED_CDS"/>
    <property type="molecule type" value="Genomic_DNA"/>
</dbReference>
<dbReference type="RefSeq" id="NP_001410903.1">
    <property type="nucleotide sequence ID" value="NM_001423974.1"/>
</dbReference>
<dbReference type="RefSeq" id="XP_694879.2">
    <property type="nucleotide sequence ID" value="XM_689787.6"/>
</dbReference>
<dbReference type="SMR" id="E7F6F7"/>
<dbReference type="FunCoup" id="E7F6F7">
    <property type="interactions" value="1267"/>
</dbReference>
<dbReference type="STRING" id="7955.ENSDARP00000085602"/>
<dbReference type="PaxDb" id="7955-ENSDARP00000085602"/>
<dbReference type="PeptideAtlas" id="E7F6F7"/>
<dbReference type="Ensembl" id="ENSDART00000091169">
    <property type="protein sequence ID" value="ENSDARP00000085602"/>
    <property type="gene ID" value="ENSDARG00000062795"/>
</dbReference>
<dbReference type="GeneID" id="566515"/>
<dbReference type="eggNOG" id="KOG0057">
    <property type="taxonomic scope" value="Eukaryota"/>
</dbReference>
<dbReference type="HOGENOM" id="CLU_000604_84_4_1"/>
<dbReference type="InParanoid" id="E7F6F7"/>
<dbReference type="OMA" id="VFHIIPI"/>
<dbReference type="OrthoDB" id="6500128at2759"/>
<dbReference type="PhylomeDB" id="E7F6F7"/>
<dbReference type="TreeFam" id="TF105195"/>
<dbReference type="Reactome" id="R-DRE-1369007">
    <property type="pathway name" value="Mitochondrial ABC transporters"/>
</dbReference>
<dbReference type="PRO" id="PR:E7F6F7"/>
<dbReference type="Proteomes" id="UP000000437">
    <property type="component" value="Chromosome 14"/>
</dbReference>
<dbReference type="GO" id="GO:0005743">
    <property type="term" value="C:mitochondrial inner membrane"/>
    <property type="evidence" value="ECO:0000318"/>
    <property type="project" value="GO_Central"/>
</dbReference>
<dbReference type="GO" id="GO:0140481">
    <property type="term" value="F:ABC-type iron-sulfur cluster transporter activity"/>
    <property type="evidence" value="ECO:0000250"/>
    <property type="project" value="UniProtKB"/>
</dbReference>
<dbReference type="GO" id="GO:0005524">
    <property type="term" value="F:ATP binding"/>
    <property type="evidence" value="ECO:0007669"/>
    <property type="project" value="UniProtKB-KW"/>
</dbReference>
<dbReference type="GO" id="GO:0016887">
    <property type="term" value="F:ATP hydrolysis activity"/>
    <property type="evidence" value="ECO:0007669"/>
    <property type="project" value="InterPro"/>
</dbReference>
<dbReference type="GO" id="GO:0042626">
    <property type="term" value="F:ATPase-coupled transmembrane transporter activity"/>
    <property type="evidence" value="ECO:0000318"/>
    <property type="project" value="GO_Central"/>
</dbReference>
<dbReference type="GO" id="GO:1990748">
    <property type="term" value="P:cellular detoxification"/>
    <property type="evidence" value="ECO:0000315"/>
    <property type="project" value="UniProtKB"/>
</dbReference>
<dbReference type="GO" id="GO:0010312">
    <property type="term" value="P:detoxification of zinc ion"/>
    <property type="evidence" value="ECO:0000315"/>
    <property type="project" value="UniProtKB"/>
</dbReference>
<dbReference type="GO" id="GO:0006879">
    <property type="term" value="P:intracellular iron ion homeostasis"/>
    <property type="evidence" value="ECO:0000250"/>
    <property type="project" value="UniProtKB"/>
</dbReference>
<dbReference type="GO" id="GO:0016226">
    <property type="term" value="P:iron-sulfur cluster assembly"/>
    <property type="evidence" value="ECO:0000250"/>
    <property type="project" value="UniProtKB"/>
</dbReference>
<dbReference type="GO" id="GO:0140466">
    <property type="term" value="P:iron-sulfur cluster export from the mitochondrion"/>
    <property type="evidence" value="ECO:0000250"/>
    <property type="project" value="UniProtKB"/>
</dbReference>
<dbReference type="GO" id="GO:1903427">
    <property type="term" value="P:negative regulation of reactive oxygen species biosynthetic process"/>
    <property type="evidence" value="ECO:0000250"/>
    <property type="project" value="UniProtKB"/>
</dbReference>
<dbReference type="GO" id="GO:0070455">
    <property type="term" value="P:positive regulation of heme biosynthetic process"/>
    <property type="evidence" value="ECO:0000250"/>
    <property type="project" value="UniProtKB"/>
</dbReference>
<dbReference type="GO" id="GO:0055085">
    <property type="term" value="P:transmembrane transport"/>
    <property type="evidence" value="ECO:0000318"/>
    <property type="project" value="GO_Central"/>
</dbReference>
<dbReference type="CDD" id="cd18582">
    <property type="entry name" value="ABC_6TM_ATM1_ABCB7"/>
    <property type="match status" value="1"/>
</dbReference>
<dbReference type="CDD" id="cd03253">
    <property type="entry name" value="ABCC_ATM1_transporter"/>
    <property type="match status" value="1"/>
</dbReference>
<dbReference type="FunFam" id="1.20.1560.10:FF:000004">
    <property type="entry name" value="ATP-binding cassette sub-family B member 7"/>
    <property type="match status" value="1"/>
</dbReference>
<dbReference type="FunFam" id="3.40.50.300:FF:000186">
    <property type="entry name" value="ATP-binding cassette sub-family B member 7, mitochondrial"/>
    <property type="match status" value="1"/>
</dbReference>
<dbReference type="Gene3D" id="1.20.1560.10">
    <property type="entry name" value="ABC transporter type 1, transmembrane domain"/>
    <property type="match status" value="1"/>
</dbReference>
<dbReference type="Gene3D" id="3.40.50.300">
    <property type="entry name" value="P-loop containing nucleotide triphosphate hydrolases"/>
    <property type="match status" value="1"/>
</dbReference>
<dbReference type="InterPro" id="IPR003593">
    <property type="entry name" value="AAA+_ATPase"/>
</dbReference>
<dbReference type="InterPro" id="IPR011527">
    <property type="entry name" value="ABC1_TM_dom"/>
</dbReference>
<dbReference type="InterPro" id="IPR036640">
    <property type="entry name" value="ABC1_TM_sf"/>
</dbReference>
<dbReference type="InterPro" id="IPR003439">
    <property type="entry name" value="ABC_transporter-like_ATP-bd"/>
</dbReference>
<dbReference type="InterPro" id="IPR017871">
    <property type="entry name" value="ABC_transporter-like_CS"/>
</dbReference>
<dbReference type="InterPro" id="IPR027417">
    <property type="entry name" value="P-loop_NTPase"/>
</dbReference>
<dbReference type="InterPro" id="IPR039421">
    <property type="entry name" value="Type_1_exporter"/>
</dbReference>
<dbReference type="PANTHER" id="PTHR24221">
    <property type="entry name" value="ATP-BINDING CASSETTE SUB-FAMILY B"/>
    <property type="match status" value="1"/>
</dbReference>
<dbReference type="PANTHER" id="PTHR24221:SF402">
    <property type="entry name" value="IRON-SULFUR CLUSTERS TRANSPORTER ABCB7, MITOCHONDRIAL"/>
    <property type="match status" value="1"/>
</dbReference>
<dbReference type="Pfam" id="PF00664">
    <property type="entry name" value="ABC_membrane"/>
    <property type="match status" value="1"/>
</dbReference>
<dbReference type="Pfam" id="PF00005">
    <property type="entry name" value="ABC_tran"/>
    <property type="match status" value="1"/>
</dbReference>
<dbReference type="SMART" id="SM00382">
    <property type="entry name" value="AAA"/>
    <property type="match status" value="1"/>
</dbReference>
<dbReference type="SUPFAM" id="SSF90123">
    <property type="entry name" value="ABC transporter transmembrane region"/>
    <property type="match status" value="1"/>
</dbReference>
<dbReference type="SUPFAM" id="SSF52540">
    <property type="entry name" value="P-loop containing nucleoside triphosphate hydrolases"/>
    <property type="match status" value="1"/>
</dbReference>
<dbReference type="PROSITE" id="PS50929">
    <property type="entry name" value="ABC_TM1F"/>
    <property type="match status" value="1"/>
</dbReference>
<dbReference type="PROSITE" id="PS00211">
    <property type="entry name" value="ABC_TRANSPORTER_1"/>
    <property type="match status" value="1"/>
</dbReference>
<dbReference type="PROSITE" id="PS50893">
    <property type="entry name" value="ABC_TRANSPORTER_2"/>
    <property type="match status" value="1"/>
</dbReference>